<gene>
    <name type="primary">RRP12</name>
    <name type="synonym">KIAA0690</name>
</gene>
<accession>Q5JTH9</accession>
<accession>B4DK00</accession>
<accession>E9PCK7</accession>
<accession>Q5JTH8</accession>
<accession>Q69YK4</accession>
<accession>Q96E87</accession>
<accession>Q9BUH3</accession>
<accession>Q9Y4C7</accession>
<reference key="1">
    <citation type="journal article" date="1998" name="DNA Res.">
        <title>Prediction of the coding sequences of unidentified human genes. X. The complete sequences of 100 new cDNA clones from brain which can code for large proteins in vitro.</title>
        <authorList>
            <person name="Ishikawa K."/>
            <person name="Nagase T."/>
            <person name="Suyama M."/>
            <person name="Miyajima N."/>
            <person name="Tanaka A."/>
            <person name="Kotani H."/>
            <person name="Nomura N."/>
            <person name="Ohara O."/>
        </authorList>
    </citation>
    <scope>NUCLEOTIDE SEQUENCE [LARGE SCALE MRNA] (ISOFORM 2)</scope>
    <scope>TISSUE SPECIFICITY</scope>
    <scope>VARIANT SER-1145</scope>
    <source>
        <tissue>Brain</tissue>
    </source>
</reference>
<reference key="2">
    <citation type="journal article" date="2004" name="Nat. Genet.">
        <title>Complete sequencing and characterization of 21,243 full-length human cDNAs.</title>
        <authorList>
            <person name="Ota T."/>
            <person name="Suzuki Y."/>
            <person name="Nishikawa T."/>
            <person name="Otsuki T."/>
            <person name="Sugiyama T."/>
            <person name="Irie R."/>
            <person name="Wakamatsu A."/>
            <person name="Hayashi K."/>
            <person name="Sato H."/>
            <person name="Nagai K."/>
            <person name="Kimura K."/>
            <person name="Makita H."/>
            <person name="Sekine M."/>
            <person name="Obayashi M."/>
            <person name="Nishi T."/>
            <person name="Shibahara T."/>
            <person name="Tanaka T."/>
            <person name="Ishii S."/>
            <person name="Yamamoto J."/>
            <person name="Saito K."/>
            <person name="Kawai Y."/>
            <person name="Isono Y."/>
            <person name="Nakamura Y."/>
            <person name="Nagahari K."/>
            <person name="Murakami K."/>
            <person name="Yasuda T."/>
            <person name="Iwayanagi T."/>
            <person name="Wagatsuma M."/>
            <person name="Shiratori A."/>
            <person name="Sudo H."/>
            <person name="Hosoiri T."/>
            <person name="Kaku Y."/>
            <person name="Kodaira H."/>
            <person name="Kondo H."/>
            <person name="Sugawara M."/>
            <person name="Takahashi M."/>
            <person name="Kanda K."/>
            <person name="Yokoi T."/>
            <person name="Furuya T."/>
            <person name="Kikkawa E."/>
            <person name="Omura Y."/>
            <person name="Abe K."/>
            <person name="Kamihara K."/>
            <person name="Katsuta N."/>
            <person name="Sato K."/>
            <person name="Tanikawa M."/>
            <person name="Yamazaki M."/>
            <person name="Ninomiya K."/>
            <person name="Ishibashi T."/>
            <person name="Yamashita H."/>
            <person name="Murakawa K."/>
            <person name="Fujimori K."/>
            <person name="Tanai H."/>
            <person name="Kimata M."/>
            <person name="Watanabe M."/>
            <person name="Hiraoka S."/>
            <person name="Chiba Y."/>
            <person name="Ishida S."/>
            <person name="Ono Y."/>
            <person name="Takiguchi S."/>
            <person name="Watanabe S."/>
            <person name="Yosida M."/>
            <person name="Hotuta T."/>
            <person name="Kusano J."/>
            <person name="Kanehori K."/>
            <person name="Takahashi-Fujii A."/>
            <person name="Hara H."/>
            <person name="Tanase T.-O."/>
            <person name="Nomura Y."/>
            <person name="Togiya S."/>
            <person name="Komai F."/>
            <person name="Hara R."/>
            <person name="Takeuchi K."/>
            <person name="Arita M."/>
            <person name="Imose N."/>
            <person name="Musashino K."/>
            <person name="Yuuki H."/>
            <person name="Oshima A."/>
            <person name="Sasaki N."/>
            <person name="Aotsuka S."/>
            <person name="Yoshikawa Y."/>
            <person name="Matsunawa H."/>
            <person name="Ichihara T."/>
            <person name="Shiohata N."/>
            <person name="Sano S."/>
            <person name="Moriya S."/>
            <person name="Momiyama H."/>
            <person name="Satoh N."/>
            <person name="Takami S."/>
            <person name="Terashima Y."/>
            <person name="Suzuki O."/>
            <person name="Nakagawa S."/>
            <person name="Senoh A."/>
            <person name="Mizoguchi H."/>
            <person name="Goto Y."/>
            <person name="Shimizu F."/>
            <person name="Wakebe H."/>
            <person name="Hishigaki H."/>
            <person name="Watanabe T."/>
            <person name="Sugiyama A."/>
            <person name="Takemoto M."/>
            <person name="Kawakami B."/>
            <person name="Yamazaki M."/>
            <person name="Watanabe K."/>
            <person name="Kumagai A."/>
            <person name="Itakura S."/>
            <person name="Fukuzumi Y."/>
            <person name="Fujimori Y."/>
            <person name="Komiyama M."/>
            <person name="Tashiro H."/>
            <person name="Tanigami A."/>
            <person name="Fujiwara T."/>
            <person name="Ono T."/>
            <person name="Yamada K."/>
            <person name="Fujii Y."/>
            <person name="Ozaki K."/>
            <person name="Hirao M."/>
            <person name="Ohmori Y."/>
            <person name="Kawabata A."/>
            <person name="Hikiji T."/>
            <person name="Kobatake N."/>
            <person name="Inagaki H."/>
            <person name="Ikema Y."/>
            <person name="Okamoto S."/>
            <person name="Okitani R."/>
            <person name="Kawakami T."/>
            <person name="Noguchi S."/>
            <person name="Itoh T."/>
            <person name="Shigeta K."/>
            <person name="Senba T."/>
            <person name="Matsumura K."/>
            <person name="Nakajima Y."/>
            <person name="Mizuno T."/>
            <person name="Morinaga M."/>
            <person name="Sasaki M."/>
            <person name="Togashi T."/>
            <person name="Oyama M."/>
            <person name="Hata H."/>
            <person name="Watanabe M."/>
            <person name="Komatsu T."/>
            <person name="Mizushima-Sugano J."/>
            <person name="Satoh T."/>
            <person name="Shirai Y."/>
            <person name="Takahashi Y."/>
            <person name="Nakagawa K."/>
            <person name="Okumura K."/>
            <person name="Nagase T."/>
            <person name="Nomura N."/>
            <person name="Kikuchi H."/>
            <person name="Masuho Y."/>
            <person name="Yamashita R."/>
            <person name="Nakai K."/>
            <person name="Yada T."/>
            <person name="Nakamura Y."/>
            <person name="Ohara O."/>
            <person name="Isogai T."/>
            <person name="Sugano S."/>
        </authorList>
    </citation>
    <scope>NUCLEOTIDE SEQUENCE [LARGE SCALE MRNA] (ISOFORM 3)</scope>
    <scope>VARIANT SER-1145</scope>
    <source>
        <tissue>Thalamus</tissue>
    </source>
</reference>
<reference key="3">
    <citation type="journal article" date="2004" name="Nature">
        <title>The DNA sequence and comparative analysis of human chromosome 10.</title>
        <authorList>
            <person name="Deloukas P."/>
            <person name="Earthrowl M.E."/>
            <person name="Grafham D.V."/>
            <person name="Rubenfield M."/>
            <person name="French L."/>
            <person name="Steward C.A."/>
            <person name="Sims S.K."/>
            <person name="Jones M.C."/>
            <person name="Searle S."/>
            <person name="Scott C."/>
            <person name="Howe K."/>
            <person name="Hunt S.E."/>
            <person name="Andrews T.D."/>
            <person name="Gilbert J.G.R."/>
            <person name="Swarbreck D."/>
            <person name="Ashurst J.L."/>
            <person name="Taylor A."/>
            <person name="Battles J."/>
            <person name="Bird C.P."/>
            <person name="Ainscough R."/>
            <person name="Almeida J.P."/>
            <person name="Ashwell R.I.S."/>
            <person name="Ambrose K.D."/>
            <person name="Babbage A.K."/>
            <person name="Bagguley C.L."/>
            <person name="Bailey J."/>
            <person name="Banerjee R."/>
            <person name="Bates K."/>
            <person name="Beasley H."/>
            <person name="Bray-Allen S."/>
            <person name="Brown A.J."/>
            <person name="Brown J.Y."/>
            <person name="Burford D.C."/>
            <person name="Burrill W."/>
            <person name="Burton J."/>
            <person name="Cahill P."/>
            <person name="Camire D."/>
            <person name="Carter N.P."/>
            <person name="Chapman J.C."/>
            <person name="Clark S.Y."/>
            <person name="Clarke G."/>
            <person name="Clee C.M."/>
            <person name="Clegg S."/>
            <person name="Corby N."/>
            <person name="Coulson A."/>
            <person name="Dhami P."/>
            <person name="Dutta I."/>
            <person name="Dunn M."/>
            <person name="Faulkner L."/>
            <person name="Frankish A."/>
            <person name="Frankland J.A."/>
            <person name="Garner P."/>
            <person name="Garnett J."/>
            <person name="Gribble S."/>
            <person name="Griffiths C."/>
            <person name="Grocock R."/>
            <person name="Gustafson E."/>
            <person name="Hammond S."/>
            <person name="Harley J.L."/>
            <person name="Hart E."/>
            <person name="Heath P.D."/>
            <person name="Ho T.P."/>
            <person name="Hopkins B."/>
            <person name="Horne J."/>
            <person name="Howden P.J."/>
            <person name="Huckle E."/>
            <person name="Hynds C."/>
            <person name="Johnson C."/>
            <person name="Johnson D."/>
            <person name="Kana A."/>
            <person name="Kay M."/>
            <person name="Kimberley A.M."/>
            <person name="Kershaw J.K."/>
            <person name="Kokkinaki M."/>
            <person name="Laird G.K."/>
            <person name="Lawlor S."/>
            <person name="Lee H.M."/>
            <person name="Leongamornlert D.A."/>
            <person name="Laird G."/>
            <person name="Lloyd C."/>
            <person name="Lloyd D.M."/>
            <person name="Loveland J."/>
            <person name="Lovell J."/>
            <person name="McLaren S."/>
            <person name="McLay K.E."/>
            <person name="McMurray A."/>
            <person name="Mashreghi-Mohammadi M."/>
            <person name="Matthews L."/>
            <person name="Milne S."/>
            <person name="Nickerson T."/>
            <person name="Nguyen M."/>
            <person name="Overton-Larty E."/>
            <person name="Palmer S.A."/>
            <person name="Pearce A.V."/>
            <person name="Peck A.I."/>
            <person name="Pelan S."/>
            <person name="Phillimore B."/>
            <person name="Porter K."/>
            <person name="Rice C.M."/>
            <person name="Rogosin A."/>
            <person name="Ross M.T."/>
            <person name="Sarafidou T."/>
            <person name="Sehra H.K."/>
            <person name="Shownkeen R."/>
            <person name="Skuce C.D."/>
            <person name="Smith M."/>
            <person name="Standring L."/>
            <person name="Sycamore N."/>
            <person name="Tester J."/>
            <person name="Thorpe A."/>
            <person name="Torcasso W."/>
            <person name="Tracey A."/>
            <person name="Tromans A."/>
            <person name="Tsolas J."/>
            <person name="Wall M."/>
            <person name="Walsh J."/>
            <person name="Wang H."/>
            <person name="Weinstock K."/>
            <person name="West A.P."/>
            <person name="Willey D.L."/>
            <person name="Whitehead S.L."/>
            <person name="Wilming L."/>
            <person name="Wray P.W."/>
            <person name="Young L."/>
            <person name="Chen Y."/>
            <person name="Lovering R.C."/>
            <person name="Moschonas N.K."/>
            <person name="Siebert R."/>
            <person name="Fechtel K."/>
            <person name="Bentley D."/>
            <person name="Durbin R.M."/>
            <person name="Hubbard T."/>
            <person name="Doucette-Stamm L."/>
            <person name="Beck S."/>
            <person name="Smith D.R."/>
            <person name="Rogers J."/>
        </authorList>
    </citation>
    <scope>NUCLEOTIDE SEQUENCE [LARGE SCALE GENOMIC DNA]</scope>
</reference>
<reference key="4">
    <citation type="journal article" date="2004" name="Genome Res.">
        <title>The status, quality, and expansion of the NIH full-length cDNA project: the Mammalian Gene Collection (MGC).</title>
        <authorList>
            <consortium name="The MGC Project Team"/>
        </authorList>
    </citation>
    <scope>NUCLEOTIDE SEQUENCE [LARGE SCALE MRNA] (ISOFORM 1)</scope>
    <scope>VARIANTS SER-1145 AND GLN-1281</scope>
</reference>
<reference key="5">
    <citation type="journal article" date="2007" name="BMC Genomics">
        <title>The full-ORF clone resource of the German cDNA consortium.</title>
        <authorList>
            <person name="Bechtel S."/>
            <person name="Rosenfelder H."/>
            <person name="Duda A."/>
            <person name="Schmidt C.P."/>
            <person name="Ernst U."/>
            <person name="Wellenreuther R."/>
            <person name="Mehrle A."/>
            <person name="Schuster C."/>
            <person name="Bahr A."/>
            <person name="Bloecker H."/>
            <person name="Heubner D."/>
            <person name="Hoerlein A."/>
            <person name="Michel G."/>
            <person name="Wedler H."/>
            <person name="Koehrer K."/>
            <person name="Ottenwaelder B."/>
            <person name="Poustka A."/>
            <person name="Wiemann S."/>
            <person name="Schupp I."/>
        </authorList>
    </citation>
    <scope>NUCLEOTIDE SEQUENCE [LARGE SCALE MRNA] OF 670-1297 (ISOFORMS 1/2)</scope>
    <scope>VARIANT GLN-1281</scope>
</reference>
<reference key="6">
    <citation type="journal article" date="2002" name="Mol. Biol. Cell">
        <title>Functional proteomic analysis of human nucleolus.</title>
        <authorList>
            <person name="Scherl A."/>
            <person name="Coute Y."/>
            <person name="Deon C."/>
            <person name="Calle A."/>
            <person name="Kindbeiter K."/>
            <person name="Sanchez J.-C."/>
            <person name="Greco A."/>
            <person name="Hochstrasser D.F."/>
            <person name="Diaz J.-J."/>
        </authorList>
    </citation>
    <scope>SUBCELLULAR LOCATION [LARGE SCALE ANALYSIS]</scope>
    <source>
        <tissue>Cervix carcinoma</tissue>
    </source>
</reference>
<reference key="7">
    <citation type="journal article" date="2006" name="Cell">
        <title>Global, in vivo, and site-specific phosphorylation dynamics in signaling networks.</title>
        <authorList>
            <person name="Olsen J.V."/>
            <person name="Blagoev B."/>
            <person name="Gnad F."/>
            <person name="Macek B."/>
            <person name="Kumar C."/>
            <person name="Mortensen P."/>
            <person name="Mann M."/>
        </authorList>
    </citation>
    <scope>PHOSPHORYLATION [LARGE SCALE ANALYSIS] AT SER-1080</scope>
    <scope>IDENTIFICATION BY MASS SPECTROMETRY [LARGE SCALE ANALYSIS]</scope>
    <source>
        <tissue>Cervix carcinoma</tissue>
    </source>
</reference>
<reference key="8">
    <citation type="journal article" date="2008" name="Mol. Cell">
        <title>Kinase-selective enrichment enables quantitative phosphoproteomics of the kinome across the cell cycle.</title>
        <authorList>
            <person name="Daub H."/>
            <person name="Olsen J.V."/>
            <person name="Bairlein M."/>
            <person name="Gnad F."/>
            <person name="Oppermann F.S."/>
            <person name="Korner R."/>
            <person name="Greff Z."/>
            <person name="Keri G."/>
            <person name="Stemmann O."/>
            <person name="Mann M."/>
        </authorList>
    </citation>
    <scope>PHOSPHORYLATION [LARGE SCALE ANALYSIS] AT SER-97; SER-1072 AND SER-1080</scope>
    <scope>IDENTIFICATION BY MASS SPECTROMETRY [LARGE SCALE ANALYSIS]</scope>
    <source>
        <tissue>Cervix carcinoma</tissue>
    </source>
</reference>
<reference key="9">
    <citation type="journal article" date="2008" name="Proc. Natl. Acad. Sci. U.S.A.">
        <title>A quantitative atlas of mitotic phosphorylation.</title>
        <authorList>
            <person name="Dephoure N."/>
            <person name="Zhou C."/>
            <person name="Villen J."/>
            <person name="Beausoleil S.A."/>
            <person name="Bakalarski C.E."/>
            <person name="Elledge S.J."/>
            <person name="Gygi S.P."/>
        </authorList>
    </citation>
    <scope>PHOSPHORYLATION [LARGE SCALE ANALYSIS] AT SER-1080</scope>
    <scope>IDENTIFICATION BY MASS SPECTROMETRY [LARGE SCALE ANALYSIS]</scope>
    <source>
        <tissue>Cervix carcinoma</tissue>
    </source>
</reference>
<reference key="10">
    <citation type="journal article" date="2009" name="Anal. Chem.">
        <title>Lys-N and trypsin cover complementary parts of the phosphoproteome in a refined SCX-based approach.</title>
        <authorList>
            <person name="Gauci S."/>
            <person name="Helbig A.O."/>
            <person name="Slijper M."/>
            <person name="Krijgsveld J."/>
            <person name="Heck A.J."/>
            <person name="Mohammed S."/>
        </authorList>
    </citation>
    <scope>IDENTIFICATION BY MASS SPECTROMETRY [LARGE SCALE ANALYSIS]</scope>
</reference>
<reference key="11">
    <citation type="journal article" date="2009" name="Sci. Signal.">
        <title>Quantitative phosphoproteomic analysis of T cell receptor signaling reveals system-wide modulation of protein-protein interactions.</title>
        <authorList>
            <person name="Mayya V."/>
            <person name="Lundgren D.H."/>
            <person name="Hwang S.-I."/>
            <person name="Rezaul K."/>
            <person name="Wu L."/>
            <person name="Eng J.K."/>
            <person name="Rodionov V."/>
            <person name="Han D.K."/>
        </authorList>
    </citation>
    <scope>PHOSPHORYLATION [LARGE SCALE ANALYSIS] AT SER-72; THR-77 AND SER-1080</scope>
    <scope>IDENTIFICATION BY MASS SPECTROMETRY [LARGE SCALE ANALYSIS]</scope>
    <source>
        <tissue>Leukemic T-cell</tissue>
    </source>
</reference>
<reference key="12">
    <citation type="journal article" date="2010" name="Sci. Signal.">
        <title>Quantitative phosphoproteomics reveals widespread full phosphorylation site occupancy during mitosis.</title>
        <authorList>
            <person name="Olsen J.V."/>
            <person name="Vermeulen M."/>
            <person name="Santamaria A."/>
            <person name="Kumar C."/>
            <person name="Miller M.L."/>
            <person name="Jensen L.J."/>
            <person name="Gnad F."/>
            <person name="Cox J."/>
            <person name="Jensen T.S."/>
            <person name="Nigg E.A."/>
            <person name="Brunak S."/>
            <person name="Mann M."/>
        </authorList>
    </citation>
    <scope>PHOSPHORYLATION [LARGE SCALE ANALYSIS] AT SER-1080</scope>
    <scope>IDENTIFICATION BY MASS SPECTROMETRY [LARGE SCALE ANALYSIS]</scope>
    <source>
        <tissue>Cervix carcinoma</tissue>
    </source>
</reference>
<reference key="13">
    <citation type="journal article" date="2011" name="BMC Syst. Biol.">
        <title>Initial characterization of the human central proteome.</title>
        <authorList>
            <person name="Burkard T.R."/>
            <person name="Planyavsky M."/>
            <person name="Kaupe I."/>
            <person name="Breitwieser F.P."/>
            <person name="Buerckstuemmer T."/>
            <person name="Bennett K.L."/>
            <person name="Superti-Furga G."/>
            <person name="Colinge J."/>
        </authorList>
    </citation>
    <scope>IDENTIFICATION BY MASS SPECTROMETRY [LARGE SCALE ANALYSIS]</scope>
</reference>
<reference key="14">
    <citation type="journal article" date="2011" name="Sci. Signal.">
        <title>System-wide temporal characterization of the proteome and phosphoproteome of human embryonic stem cell differentiation.</title>
        <authorList>
            <person name="Rigbolt K.T."/>
            <person name="Prokhorova T.A."/>
            <person name="Akimov V."/>
            <person name="Henningsen J."/>
            <person name="Johansen P.T."/>
            <person name="Kratchmarova I."/>
            <person name="Kassem M."/>
            <person name="Mann M."/>
            <person name="Olsen J.V."/>
            <person name="Blagoev B."/>
        </authorList>
    </citation>
    <scope>PHOSPHORYLATION [LARGE SCALE ANALYSIS] AT SER-1072 AND SER-1080</scope>
    <scope>IDENTIFICATION BY MASS SPECTROMETRY [LARGE SCALE ANALYSIS]</scope>
</reference>
<reference key="15">
    <citation type="journal article" date="2013" name="J. Proteome Res.">
        <title>Toward a comprehensive characterization of a human cancer cell phosphoproteome.</title>
        <authorList>
            <person name="Zhou H."/>
            <person name="Di Palma S."/>
            <person name="Preisinger C."/>
            <person name="Peng M."/>
            <person name="Polat A.N."/>
            <person name="Heck A.J."/>
            <person name="Mohammed S."/>
        </authorList>
    </citation>
    <scope>PHOSPHORYLATION [LARGE SCALE ANALYSIS] AT SER-49; SER-66; SER-72; THR-88; SER-1049 AND SER-1080</scope>
    <scope>IDENTIFICATION BY MASS SPECTROMETRY [LARGE SCALE ANALYSIS]</scope>
    <source>
        <tissue>Cervix carcinoma</tissue>
        <tissue>Erythroleukemia</tissue>
    </source>
</reference>
<reference key="16">
    <citation type="journal article" date="2014" name="Proc. Natl. Acad. Sci. U.S.A.">
        <title>Mapping of SUMO sites and analysis of SUMOylation changes induced by external stimuli.</title>
        <authorList>
            <person name="Impens F."/>
            <person name="Radoshevich L."/>
            <person name="Cossart P."/>
            <person name="Ribet D."/>
        </authorList>
    </citation>
    <scope>SUMOYLATION [LARGE SCALE ANALYSIS] AT LYS-71</scope>
    <scope>IDENTIFICATION BY MASS SPECTROMETRY [LARGE SCALE ANALYSIS]</scope>
</reference>
<name>RRP12_HUMAN</name>
<comment type="subcellular location">
    <subcellularLocation>
        <location evidence="3">Nucleus</location>
        <location evidence="3">Nucleolus</location>
    </subcellularLocation>
    <subcellularLocation>
        <location evidence="10">Nucleus membrane</location>
        <topology evidence="10">Single-pass membrane protein</topology>
    </subcellularLocation>
</comment>
<comment type="alternative products">
    <event type="alternative splicing"/>
    <isoform>
        <id>Q5JTH9-1</id>
        <name>1</name>
        <sequence type="displayed"/>
    </isoform>
    <isoform>
        <id>Q5JTH9-2</id>
        <name>2</name>
        <sequence type="described" ref="VSP_014798"/>
    </isoform>
    <isoform>
        <id>Q5JTH9-3</id>
        <name>3</name>
        <sequence type="described" ref="VSP_045674"/>
    </isoform>
</comment>
<comment type="tissue specificity">
    <text evidence="7">Weakly expressed. Expressed at intermediate level in testis and ovary.</text>
</comment>
<comment type="similarity">
    <text evidence="10">Belongs to the RRP12 family.</text>
</comment>
<comment type="sequence caution" evidence="10">
    <conflict type="erroneous initiation">
        <sequence resource="EMBL-CDS" id="BAA31665"/>
    </conflict>
</comment>
<sequence length="1297" mass="143702">MGRSGKLPSGVSAKLKRWKKGHSSDSNPAICRHRQAARSRFFSRPSGRSDLTVDAVKLHNELQSGSLRLGKSEAPETPMEEEAELVLTEKSSGTFLSGLSDCTNVTFSKVQRFWESNSAAHKEICAVLAAVTEVIRSQGGKETETEYFAALMTTMEAVESPESLAAVAYLLNLVLKRVPSPVLIKKFSDTSKAFMDIMSAQASSGSTSVLRWVLSCLATLLRKQDLEAWGYPVTLQVYHGLLSFTVHPKPKIRKAAQHGVCSVLKGSEFMFEKAPAHHPAAISTAKFCIQEIEKSGGSKEATTTLHMLTLLKDLLPCFPEGLVKSCSETLLRVMTLSHVLVTACAMQAFHSLFHARPGLSTLSAELNAQIITALYDYVPSENDLQPLLAWLKVMEKAHINLVRLQWDLGLGHLPRFFGTAVTCLLSPHSQVLTAATQSLKEILKECVAPHMADIGSVTSSASGPAQSVAKMFRAVEEGLTYKFHAAWSSVLQLLCVFFEACGRQAHPVMRKCLQSLCDLRLSPHFPHTAALDQAVGAAVTSMGPEVVLQAVPLEIDGSEETLDFPRSWLLPVIRDHVQETRLGFFTTYFLPLANTLKSKAMDLAQAGSTVESKIYDTLQWQMWTLLPGFCTRPTDVAISFKGLARTLGMAISERPDLRVTVCQALRTLITKGCQAEADRAEVSRFAKNFLPILFNLYGQPVAAGDTPAPRRAVLETIRTYLTITDTQLVNSLLEKASEKVLDPASSDFTRLSVLDLVVALAPCADEAAISKLYSTIRPYLESKAHGVQKKAYRVLEEVCASPQGPGALFVQSHLEDLKKTLLDSLRSTSSPAKRPRLKCLLHIVRKLSAEHKEFITALIPEVILCTKEVSVGARKNAFALLVEMGHAFLRFGSNQEEALQCYLVLIYPGLVGAVTMVSCSILALTHLLFEFKGLMGTSTVEQLLENVCLLLASRTRDVVKSALGFIKVAVTVMDVAHLAKHVQLVMEAIGKLSDDMRRHFRMKLRNLFTKFIRKFGFELVKRLLPEEYHRVLVNIRKAEARAKRHRALSQAAVEEEEEEEEEEEPAQGKGDSIEEILADSEDEEDNEEEERSRGKEQRKLARQRSRAWLKEGGGDEPLNFLDPKVAQRVLATQPGPGRGRKKDHGFKVSADGRLIIREEADGNKMEEEEGAKGEDEEMADPMEDVIIRNKKHQKLKHQKEAEEEELEIPPQYQAGGSGIHRPVAKKAMPGAEYKAKKAKGDVKKKGRPDPYAYIPLNRSKLNRRKKMKLQGQFKGLVKAARRGSQVGHKNRRKDRRP</sequence>
<protein>
    <recommendedName>
        <fullName>RRP12-like protein</fullName>
    </recommendedName>
</protein>
<dbReference type="EMBL" id="AB014590">
    <property type="protein sequence ID" value="BAA31665.1"/>
    <property type="status" value="ALT_INIT"/>
    <property type="molecule type" value="mRNA"/>
</dbReference>
<dbReference type="EMBL" id="AK296315">
    <property type="protein sequence ID" value="BAG59012.1"/>
    <property type="molecule type" value="mRNA"/>
</dbReference>
<dbReference type="EMBL" id="AL355490">
    <property type="status" value="NOT_ANNOTATED_CDS"/>
    <property type="molecule type" value="Genomic_DNA"/>
</dbReference>
<dbReference type="EMBL" id="BC002621">
    <property type="protein sequence ID" value="AAH02621.3"/>
    <property type="molecule type" value="mRNA"/>
</dbReference>
<dbReference type="EMBL" id="BC012745">
    <property type="protein sequence ID" value="AAH12745.1"/>
    <property type="molecule type" value="mRNA"/>
</dbReference>
<dbReference type="EMBL" id="AL832924">
    <property type="protein sequence ID" value="CAH10606.1"/>
    <property type="molecule type" value="mRNA"/>
</dbReference>
<dbReference type="CCDS" id="CCDS44467.1">
    <molecule id="Q5JTH9-3"/>
</dbReference>
<dbReference type="CCDS" id="CCDS60605.1">
    <molecule id="Q5JTH9-2"/>
</dbReference>
<dbReference type="CCDS" id="CCDS7457.1">
    <molecule id="Q5JTH9-1"/>
</dbReference>
<dbReference type="PIR" id="T00356">
    <property type="entry name" value="T00356"/>
</dbReference>
<dbReference type="RefSeq" id="NP_001138586.1">
    <molecule id="Q5JTH9-3"/>
    <property type="nucleotide sequence ID" value="NM_001145114.1"/>
</dbReference>
<dbReference type="RefSeq" id="NP_001271266.1">
    <molecule id="Q5JTH9-2"/>
    <property type="nucleotide sequence ID" value="NM_001284337.2"/>
</dbReference>
<dbReference type="RefSeq" id="NP_055994.2">
    <molecule id="Q5JTH9-1"/>
    <property type="nucleotide sequence ID" value="NM_015179.4"/>
</dbReference>
<dbReference type="PDB" id="7WTS">
    <property type="method" value="EM"/>
    <property type="resolution" value="3.20 A"/>
    <property type="chains" value="K=1-1297"/>
</dbReference>
<dbReference type="PDB" id="7WTT">
    <property type="method" value="EM"/>
    <property type="resolution" value="3.10 A"/>
    <property type="chains" value="K=1-1297"/>
</dbReference>
<dbReference type="PDB" id="7WTU">
    <property type="method" value="EM"/>
    <property type="resolution" value="3.00 A"/>
    <property type="chains" value="K=1-1297"/>
</dbReference>
<dbReference type="PDB" id="7WTV">
    <property type="method" value="EM"/>
    <property type="resolution" value="3.50 A"/>
    <property type="chains" value="K=1-1297"/>
</dbReference>
<dbReference type="PDB" id="7WTW">
    <property type="method" value="EM"/>
    <property type="resolution" value="3.20 A"/>
    <property type="chains" value="K=1-1297"/>
</dbReference>
<dbReference type="PDB" id="7WTX">
    <property type="method" value="EM"/>
    <property type="resolution" value="3.10 A"/>
    <property type="chains" value="K=1-1297"/>
</dbReference>
<dbReference type="PDB" id="7WTZ">
    <property type="method" value="EM"/>
    <property type="resolution" value="3.00 A"/>
    <property type="chains" value="K=1-1297"/>
</dbReference>
<dbReference type="PDB" id="7WU0">
    <property type="method" value="EM"/>
    <property type="resolution" value="3.30 A"/>
    <property type="chains" value="K=1-1297"/>
</dbReference>
<dbReference type="PDBsum" id="7WTS"/>
<dbReference type="PDBsum" id="7WTT"/>
<dbReference type="PDBsum" id="7WTU"/>
<dbReference type="PDBsum" id="7WTV"/>
<dbReference type="PDBsum" id="7WTW"/>
<dbReference type="PDBsum" id="7WTX"/>
<dbReference type="PDBsum" id="7WTZ"/>
<dbReference type="PDBsum" id="7WU0"/>
<dbReference type="EMDB" id="EMD-32799"/>
<dbReference type="EMDB" id="EMD-32800"/>
<dbReference type="EMDB" id="EMD-32801"/>
<dbReference type="EMDB" id="EMD-32802"/>
<dbReference type="EMDB" id="EMD-32803"/>
<dbReference type="EMDB" id="EMD-32804"/>
<dbReference type="EMDB" id="EMD-32806"/>
<dbReference type="EMDB" id="EMD-32807"/>
<dbReference type="SMR" id="Q5JTH9"/>
<dbReference type="BioGRID" id="116829">
    <property type="interactions" value="338"/>
</dbReference>
<dbReference type="FunCoup" id="Q5JTH9">
    <property type="interactions" value="3251"/>
</dbReference>
<dbReference type="IntAct" id="Q5JTH9">
    <property type="interactions" value="162"/>
</dbReference>
<dbReference type="MINT" id="Q5JTH9"/>
<dbReference type="STRING" id="9606.ENSP00000446184"/>
<dbReference type="CarbonylDB" id="Q5JTH9"/>
<dbReference type="GlyGen" id="Q5JTH9">
    <property type="glycosylation" value="4 sites, 1 O-linked glycan (3 sites)"/>
</dbReference>
<dbReference type="iPTMnet" id="Q5JTH9"/>
<dbReference type="MetOSite" id="Q5JTH9"/>
<dbReference type="PhosphoSitePlus" id="Q5JTH9"/>
<dbReference type="SwissPalm" id="Q5JTH9"/>
<dbReference type="BioMuta" id="RRP12"/>
<dbReference type="DMDM" id="71153787"/>
<dbReference type="jPOST" id="Q5JTH9"/>
<dbReference type="MassIVE" id="Q5JTH9"/>
<dbReference type="PaxDb" id="9606-ENSP00000446184"/>
<dbReference type="PeptideAtlas" id="Q5JTH9"/>
<dbReference type="ProteomicsDB" id="19463"/>
<dbReference type="ProteomicsDB" id="63219">
    <molecule id="Q5JTH9-1"/>
</dbReference>
<dbReference type="ProteomicsDB" id="63220">
    <molecule id="Q5JTH9-2"/>
</dbReference>
<dbReference type="Pumba" id="Q5JTH9"/>
<dbReference type="Antibodypedia" id="30844">
    <property type="antibodies" value="58 antibodies from 17 providers"/>
</dbReference>
<dbReference type="DNASU" id="23223"/>
<dbReference type="Ensembl" id="ENST00000315563.10">
    <molecule id="Q5JTH9-2"/>
    <property type="protein sequence ID" value="ENSP00000324315.6"/>
    <property type="gene ID" value="ENSG00000052749.15"/>
</dbReference>
<dbReference type="Ensembl" id="ENST00000370992.9">
    <molecule id="Q5JTH9-1"/>
    <property type="protein sequence ID" value="ENSP00000360031.4"/>
    <property type="gene ID" value="ENSG00000052749.15"/>
</dbReference>
<dbReference type="Ensembl" id="ENST00000414986.5">
    <molecule id="Q5JTH9-3"/>
    <property type="protein sequence ID" value="ENSP00000414863.1"/>
    <property type="gene ID" value="ENSG00000052749.15"/>
</dbReference>
<dbReference type="Ensembl" id="ENST00000536831.6">
    <molecule id="Q5JTH9-1"/>
    <property type="protein sequence ID" value="ENSP00000446184.2"/>
    <property type="gene ID" value="ENSG00000052749.15"/>
</dbReference>
<dbReference type="GeneID" id="23223"/>
<dbReference type="KEGG" id="hsa:23223"/>
<dbReference type="MANE-Select" id="ENST00000370992.9">
    <property type="protein sequence ID" value="ENSP00000360031.4"/>
    <property type="RefSeq nucleotide sequence ID" value="NM_015179.4"/>
    <property type="RefSeq protein sequence ID" value="NP_055994.2"/>
</dbReference>
<dbReference type="UCSC" id="uc001knf.4">
    <molecule id="Q5JTH9-1"/>
    <property type="organism name" value="human"/>
</dbReference>
<dbReference type="AGR" id="HGNC:29100"/>
<dbReference type="CTD" id="23223"/>
<dbReference type="DisGeNET" id="23223"/>
<dbReference type="GeneCards" id="RRP12"/>
<dbReference type="HGNC" id="HGNC:29100">
    <property type="gene designation" value="RRP12"/>
</dbReference>
<dbReference type="HPA" id="ENSG00000052749">
    <property type="expression patterns" value="Group enriched (bone marrow, skeletal muscle)"/>
</dbReference>
<dbReference type="MIM" id="617723">
    <property type="type" value="gene"/>
</dbReference>
<dbReference type="neXtProt" id="NX_Q5JTH9"/>
<dbReference type="OpenTargets" id="ENSG00000052749"/>
<dbReference type="PharmGKB" id="PA162402122"/>
<dbReference type="VEuPathDB" id="HostDB:ENSG00000052749"/>
<dbReference type="eggNOG" id="KOG1248">
    <property type="taxonomic scope" value="Eukaryota"/>
</dbReference>
<dbReference type="GeneTree" id="ENSGT00390000013106"/>
<dbReference type="HOGENOM" id="CLU_003753_0_0_1"/>
<dbReference type="InParanoid" id="Q5JTH9"/>
<dbReference type="OMA" id="PDQMKHR"/>
<dbReference type="OrthoDB" id="2192888at2759"/>
<dbReference type="PAN-GO" id="Q5JTH9">
    <property type="GO annotations" value="2 GO annotations based on evolutionary models"/>
</dbReference>
<dbReference type="PhylomeDB" id="Q5JTH9"/>
<dbReference type="TreeFam" id="TF300780"/>
<dbReference type="PathwayCommons" id="Q5JTH9"/>
<dbReference type="SignaLink" id="Q5JTH9"/>
<dbReference type="BioGRID-ORCS" id="23223">
    <property type="hits" value="662 hits in 1158 CRISPR screens"/>
</dbReference>
<dbReference type="CD-CODE" id="91857CE7">
    <property type="entry name" value="Nucleolus"/>
</dbReference>
<dbReference type="ChiTaRS" id="RRP12">
    <property type="organism name" value="human"/>
</dbReference>
<dbReference type="GeneWiki" id="RRP12"/>
<dbReference type="GenomeRNAi" id="23223"/>
<dbReference type="Pharos" id="Q5JTH9">
    <property type="development level" value="Tbio"/>
</dbReference>
<dbReference type="PRO" id="PR:Q5JTH9"/>
<dbReference type="Proteomes" id="UP000005640">
    <property type="component" value="Chromosome 10"/>
</dbReference>
<dbReference type="RNAct" id="Q5JTH9">
    <property type="molecule type" value="protein"/>
</dbReference>
<dbReference type="Bgee" id="ENSG00000052749">
    <property type="expression patterns" value="Expressed in gastrocnemius and 151 other cell types or tissues"/>
</dbReference>
<dbReference type="ExpressionAtlas" id="Q5JTH9">
    <property type="expression patterns" value="baseline and differential"/>
</dbReference>
<dbReference type="GO" id="GO:0005829">
    <property type="term" value="C:cytosol"/>
    <property type="evidence" value="ECO:0000314"/>
    <property type="project" value="HPA"/>
</dbReference>
<dbReference type="GO" id="GO:0043231">
    <property type="term" value="C:intracellular membrane-bounded organelle"/>
    <property type="evidence" value="ECO:0000314"/>
    <property type="project" value="HPA"/>
</dbReference>
<dbReference type="GO" id="GO:0031965">
    <property type="term" value="C:nuclear membrane"/>
    <property type="evidence" value="ECO:0007669"/>
    <property type="project" value="UniProtKB-SubCell"/>
</dbReference>
<dbReference type="GO" id="GO:0005730">
    <property type="term" value="C:nucleolus"/>
    <property type="evidence" value="ECO:0000314"/>
    <property type="project" value="HPA"/>
</dbReference>
<dbReference type="GO" id="GO:0005886">
    <property type="term" value="C:plasma membrane"/>
    <property type="evidence" value="ECO:0000314"/>
    <property type="project" value="HPA"/>
</dbReference>
<dbReference type="GO" id="GO:0003723">
    <property type="term" value="F:RNA binding"/>
    <property type="evidence" value="ECO:0007005"/>
    <property type="project" value="UniProtKB"/>
</dbReference>
<dbReference type="Gene3D" id="1.25.10.10">
    <property type="entry name" value="Leucine-rich Repeat Variant"/>
    <property type="match status" value="2"/>
</dbReference>
<dbReference type="InterPro" id="IPR011989">
    <property type="entry name" value="ARM-like"/>
</dbReference>
<dbReference type="InterPro" id="IPR016024">
    <property type="entry name" value="ARM-type_fold"/>
</dbReference>
<dbReference type="InterPro" id="IPR052087">
    <property type="entry name" value="RRP12"/>
</dbReference>
<dbReference type="InterPro" id="IPR012978">
    <property type="entry name" value="RRP12-like_dom"/>
</dbReference>
<dbReference type="PANTHER" id="PTHR48287">
    <property type="entry name" value="ARM REPEAT SUPERFAMILY PROTEIN"/>
    <property type="match status" value="1"/>
</dbReference>
<dbReference type="PANTHER" id="PTHR48287:SF1">
    <property type="entry name" value="ARM REPEAT SUPERFAMILY PROTEIN"/>
    <property type="match status" value="1"/>
</dbReference>
<dbReference type="Pfam" id="PF08161">
    <property type="entry name" value="RRP12_HEAT"/>
    <property type="match status" value="1"/>
</dbReference>
<dbReference type="SUPFAM" id="SSF48371">
    <property type="entry name" value="ARM repeat"/>
    <property type="match status" value="1"/>
</dbReference>
<organism>
    <name type="scientific">Homo sapiens</name>
    <name type="common">Human</name>
    <dbReference type="NCBI Taxonomy" id="9606"/>
    <lineage>
        <taxon>Eukaryota</taxon>
        <taxon>Metazoa</taxon>
        <taxon>Chordata</taxon>
        <taxon>Craniata</taxon>
        <taxon>Vertebrata</taxon>
        <taxon>Euteleostomi</taxon>
        <taxon>Mammalia</taxon>
        <taxon>Eutheria</taxon>
        <taxon>Euarchontoglires</taxon>
        <taxon>Primates</taxon>
        <taxon>Haplorrhini</taxon>
        <taxon>Catarrhini</taxon>
        <taxon>Hominidae</taxon>
        <taxon>Homo</taxon>
    </lineage>
</organism>
<evidence type="ECO:0000255" key="1"/>
<evidence type="ECO:0000256" key="2">
    <source>
        <dbReference type="SAM" id="MobiDB-lite"/>
    </source>
</evidence>
<evidence type="ECO:0000269" key="3">
    <source>
    </source>
</evidence>
<evidence type="ECO:0000269" key="4">
    <source>
    </source>
</evidence>
<evidence type="ECO:0000269" key="5">
    <source>
    </source>
</evidence>
<evidence type="ECO:0000269" key="6">
    <source>
    </source>
</evidence>
<evidence type="ECO:0000269" key="7">
    <source>
    </source>
</evidence>
<evidence type="ECO:0000303" key="8">
    <source>
    </source>
</evidence>
<evidence type="ECO:0000303" key="9">
    <source>
    </source>
</evidence>
<evidence type="ECO:0000305" key="10"/>
<evidence type="ECO:0007744" key="11">
    <source>
    </source>
</evidence>
<evidence type="ECO:0007744" key="12">
    <source>
    </source>
</evidence>
<evidence type="ECO:0007744" key="13">
    <source>
    </source>
</evidence>
<evidence type="ECO:0007744" key="14">
    <source>
    </source>
</evidence>
<evidence type="ECO:0007744" key="15">
    <source>
    </source>
</evidence>
<evidence type="ECO:0007744" key="16">
    <source>
    </source>
</evidence>
<evidence type="ECO:0007744" key="17">
    <source>
    </source>
</evidence>
<evidence type="ECO:0007744" key="18">
    <source>
    </source>
</evidence>
<evidence type="ECO:0007829" key="19">
    <source>
        <dbReference type="PDB" id="7WTS"/>
    </source>
</evidence>
<evidence type="ECO:0007829" key="20">
    <source>
        <dbReference type="PDB" id="7WTT"/>
    </source>
</evidence>
<evidence type="ECO:0007829" key="21">
    <source>
        <dbReference type="PDB" id="7WTU"/>
    </source>
</evidence>
<evidence type="ECO:0007829" key="22">
    <source>
        <dbReference type="PDB" id="7WTV"/>
    </source>
</evidence>
<evidence type="ECO:0007829" key="23">
    <source>
        <dbReference type="PDB" id="7WTW"/>
    </source>
</evidence>
<evidence type="ECO:0007829" key="24">
    <source>
        <dbReference type="PDB" id="7WTX"/>
    </source>
</evidence>
<evidence type="ECO:0007829" key="25">
    <source>
        <dbReference type="PDB" id="7WTZ"/>
    </source>
</evidence>
<keyword id="KW-0002">3D-structure</keyword>
<keyword id="KW-0025">Alternative splicing</keyword>
<keyword id="KW-1017">Isopeptide bond</keyword>
<keyword id="KW-0472">Membrane</keyword>
<keyword id="KW-0539">Nucleus</keyword>
<keyword id="KW-0597">Phosphoprotein</keyword>
<keyword id="KW-1267">Proteomics identification</keyword>
<keyword id="KW-1185">Reference proteome</keyword>
<keyword id="KW-0812">Transmembrane</keyword>
<keyword id="KW-1133">Transmembrane helix</keyword>
<keyword id="KW-0832">Ubl conjugation</keyword>
<proteinExistence type="evidence at protein level"/>
<feature type="chain" id="PRO_0000050768" description="RRP12-like protein">
    <location>
        <begin position="1"/>
        <end position="1297"/>
    </location>
</feature>
<feature type="transmembrane region" description="Helical" evidence="1">
    <location>
        <begin position="903"/>
        <end position="923"/>
    </location>
</feature>
<feature type="region of interest" description="Disordered" evidence="2">
    <location>
        <begin position="1"/>
        <end position="29"/>
    </location>
</feature>
<feature type="region of interest" description="Disordered" evidence="2">
    <location>
        <begin position="1047"/>
        <end position="1101"/>
    </location>
</feature>
<feature type="region of interest" description="Disordered" evidence="2">
    <location>
        <begin position="1131"/>
        <end position="1297"/>
    </location>
</feature>
<feature type="compositionally biased region" description="Acidic residues" evidence="2">
    <location>
        <begin position="1053"/>
        <end position="1065"/>
    </location>
</feature>
<feature type="compositionally biased region" description="Acidic residues" evidence="2">
    <location>
        <begin position="1073"/>
        <end position="1089"/>
    </location>
</feature>
<feature type="compositionally biased region" description="Basic and acidic residues" evidence="2">
    <location>
        <begin position="1090"/>
        <end position="1099"/>
    </location>
</feature>
<feature type="compositionally biased region" description="Basic and acidic residues" evidence="2">
    <location>
        <begin position="1154"/>
        <end position="1173"/>
    </location>
</feature>
<feature type="compositionally biased region" description="Acidic residues" evidence="2">
    <location>
        <begin position="1174"/>
        <end position="1183"/>
    </location>
</feature>
<feature type="compositionally biased region" description="Basic residues" evidence="2">
    <location>
        <begin position="1188"/>
        <end position="1197"/>
    </location>
</feature>
<feature type="compositionally biased region" description="Basic and acidic residues" evidence="2">
    <location>
        <begin position="1233"/>
        <end position="1243"/>
    </location>
</feature>
<feature type="compositionally biased region" description="Basic residues" evidence="2">
    <location>
        <begin position="1288"/>
        <end position="1297"/>
    </location>
</feature>
<feature type="modified residue" description="Phosphoserine" evidence="17">
    <location>
        <position position="49"/>
    </location>
</feature>
<feature type="modified residue" description="Phosphoserine" evidence="17">
    <location>
        <position position="66"/>
    </location>
</feature>
<feature type="modified residue" description="Phosphoserine" evidence="14 17">
    <location>
        <position position="72"/>
    </location>
</feature>
<feature type="modified residue" description="Phosphothreonine" evidence="14">
    <location>
        <position position="77"/>
    </location>
</feature>
<feature type="modified residue" description="Phosphothreonine" evidence="17">
    <location>
        <position position="88"/>
    </location>
</feature>
<feature type="modified residue" description="Phosphoserine" evidence="13">
    <location>
        <position position="97"/>
    </location>
</feature>
<feature type="modified residue" description="Phosphoserine" evidence="17">
    <location>
        <position position="1049"/>
    </location>
</feature>
<feature type="modified residue" description="Phosphoserine" evidence="13 16">
    <location>
        <position position="1072"/>
    </location>
</feature>
<feature type="modified residue" description="Phosphoserine" evidence="11 12 13 14 15 16 17">
    <location>
        <position position="1080"/>
    </location>
</feature>
<feature type="cross-link" description="Glycyl lysine isopeptide (Lys-Gly) (interchain with G-Cter in SUMO1)" evidence="18">
    <location>
        <position position="71"/>
    </location>
</feature>
<feature type="splice variant" id="VSP_014798" description="In isoform 2." evidence="9">
    <location>
        <begin position="152"/>
        <end position="251"/>
    </location>
</feature>
<feature type="splice variant" id="VSP_045674" description="In isoform 3." evidence="8">
    <location>
        <begin position="152"/>
        <end position="212"/>
    </location>
</feature>
<feature type="sequence variant" id="VAR_057756" description="In dbSNP:rs2275580." evidence="4 5 7">
    <original>G</original>
    <variation>S</variation>
    <location>
        <position position="1145"/>
    </location>
</feature>
<feature type="sequence variant" id="VAR_057757" description="In dbSNP:rs1048445." evidence="5 6">
    <original>R</original>
    <variation>Q</variation>
    <location>
        <position position="1281"/>
    </location>
</feature>
<feature type="sequence conflict" description="In Ref. 2; BAG59012." evidence="10" ref="2">
    <original>K</original>
    <variation>R</variation>
    <location>
        <position position="249"/>
    </location>
</feature>
<feature type="sequence conflict" description="In Ref. 2; BAG59012." evidence="10" ref="2">
    <original>K</original>
    <variation>R</variation>
    <location>
        <position position="818"/>
    </location>
</feature>
<feature type="sequence conflict" description="In Ref. 2; BAG59012." evidence="10" ref="2">
    <original>K</original>
    <variation>R</variation>
    <location>
        <position position="1196"/>
    </location>
</feature>
<feature type="helix" evidence="21">
    <location>
        <begin position="110"/>
        <end position="114"/>
    </location>
</feature>
<feature type="helix" evidence="21">
    <location>
        <begin position="118"/>
        <end position="121"/>
    </location>
</feature>
<feature type="strand" evidence="22">
    <location>
        <begin position="122"/>
        <end position="126"/>
    </location>
</feature>
<feature type="turn" evidence="21">
    <location>
        <begin position="127"/>
        <end position="129"/>
    </location>
</feature>
<feature type="helix" evidence="21">
    <location>
        <begin position="130"/>
        <end position="133"/>
    </location>
</feature>
<feature type="strand" evidence="21">
    <location>
        <begin position="136"/>
        <end position="138"/>
    </location>
</feature>
<feature type="helix" evidence="21">
    <location>
        <begin position="146"/>
        <end position="150"/>
    </location>
</feature>
<feature type="helix" evidence="21">
    <location>
        <begin position="152"/>
        <end position="155"/>
    </location>
</feature>
<feature type="turn" evidence="21">
    <location>
        <begin position="161"/>
        <end position="163"/>
    </location>
</feature>
<feature type="helix" evidence="21">
    <location>
        <begin position="164"/>
        <end position="174"/>
    </location>
</feature>
<feature type="helix" evidence="21">
    <location>
        <begin position="180"/>
        <end position="185"/>
    </location>
</feature>
<feature type="helix" evidence="21">
    <location>
        <begin position="187"/>
        <end position="204"/>
    </location>
</feature>
<feature type="helix" evidence="21">
    <location>
        <begin position="208"/>
        <end position="223"/>
    </location>
</feature>
<feature type="helix" evidence="21">
    <location>
        <begin position="233"/>
        <end position="242"/>
    </location>
</feature>
<feature type="turn" evidence="21">
    <location>
        <begin position="243"/>
        <end position="246"/>
    </location>
</feature>
<feature type="helix" evidence="21">
    <location>
        <begin position="250"/>
        <end position="264"/>
    </location>
</feature>
<feature type="helix" evidence="21">
    <location>
        <begin position="281"/>
        <end position="294"/>
    </location>
</feature>
<feature type="helix" evidence="21">
    <location>
        <begin position="303"/>
        <end position="314"/>
    </location>
</feature>
<feature type="helix" evidence="21">
    <location>
        <begin position="320"/>
        <end position="334"/>
    </location>
</feature>
<feature type="helix" evidence="21">
    <location>
        <begin position="339"/>
        <end position="354"/>
    </location>
</feature>
<feature type="turn" evidence="21">
    <location>
        <begin position="359"/>
        <end position="361"/>
    </location>
</feature>
<feature type="helix" evidence="21">
    <location>
        <begin position="364"/>
        <end position="373"/>
    </location>
</feature>
<feature type="helix" evidence="21">
    <location>
        <begin position="374"/>
        <end position="376"/>
    </location>
</feature>
<feature type="strand" evidence="20">
    <location>
        <begin position="380"/>
        <end position="382"/>
    </location>
</feature>
<feature type="helix" evidence="21">
    <location>
        <begin position="386"/>
        <end position="404"/>
    </location>
</feature>
<feature type="helix" evidence="21">
    <location>
        <begin position="406"/>
        <end position="422"/>
    </location>
</feature>
<feature type="helix" evidence="21">
    <location>
        <begin position="423"/>
        <end position="425"/>
    </location>
</feature>
<feature type="helix" evidence="21">
    <location>
        <begin position="429"/>
        <end position="445"/>
    </location>
</feature>
<feature type="helix" evidence="25">
    <location>
        <begin position="448"/>
        <end position="450"/>
    </location>
</feature>
<feature type="helix" evidence="21">
    <location>
        <begin position="451"/>
        <end position="454"/>
    </location>
</feature>
<feature type="helix" evidence="21">
    <location>
        <begin position="464"/>
        <end position="477"/>
    </location>
</feature>
<feature type="turn" evidence="21">
    <location>
        <begin position="481"/>
        <end position="483"/>
    </location>
</feature>
<feature type="strand" evidence="21">
    <location>
        <begin position="484"/>
        <end position="486"/>
    </location>
</feature>
<feature type="helix" evidence="21">
    <location>
        <begin position="487"/>
        <end position="505"/>
    </location>
</feature>
<feature type="turn" evidence="21">
    <location>
        <begin position="506"/>
        <end position="510"/>
    </location>
</feature>
<feature type="helix" evidence="21">
    <location>
        <begin position="511"/>
        <end position="519"/>
    </location>
</feature>
<feature type="strand" evidence="21">
    <location>
        <begin position="522"/>
        <end position="524"/>
    </location>
</feature>
<feature type="helix" evidence="21">
    <location>
        <begin position="528"/>
        <end position="542"/>
    </location>
</feature>
<feature type="helix" evidence="21">
    <location>
        <begin position="544"/>
        <end position="550"/>
    </location>
</feature>
<feature type="strand" evidence="25">
    <location>
        <begin position="560"/>
        <end position="562"/>
    </location>
</feature>
<feature type="turn" evidence="21">
    <location>
        <begin position="565"/>
        <end position="568"/>
    </location>
</feature>
<feature type="helix" evidence="21">
    <location>
        <begin position="569"/>
        <end position="576"/>
    </location>
</feature>
<feature type="helix" evidence="21">
    <location>
        <begin position="582"/>
        <end position="605"/>
    </location>
</feature>
<feature type="helix" evidence="21">
    <location>
        <begin position="611"/>
        <end position="622"/>
    </location>
</feature>
<feature type="turn" evidence="21">
    <location>
        <begin position="623"/>
        <end position="625"/>
    </location>
</feature>
<feature type="helix" evidence="21">
    <location>
        <begin position="626"/>
        <end position="629"/>
    </location>
</feature>
<feature type="helix" evidence="21">
    <location>
        <begin position="636"/>
        <end position="639"/>
    </location>
</feature>
<feature type="helix" evidence="21">
    <location>
        <begin position="640"/>
        <end position="642"/>
    </location>
</feature>
<feature type="helix" evidence="21">
    <location>
        <begin position="644"/>
        <end position="652"/>
    </location>
</feature>
<feature type="helix" evidence="21">
    <location>
        <begin position="655"/>
        <end position="670"/>
    </location>
</feature>
<feature type="helix" evidence="21">
    <location>
        <begin position="676"/>
        <end position="697"/>
    </location>
</feature>
<feature type="helix" evidence="21">
    <location>
        <begin position="710"/>
        <end position="722"/>
    </location>
</feature>
<feature type="helix" evidence="21">
    <location>
        <begin position="726"/>
        <end position="741"/>
    </location>
</feature>
<feature type="helix" evidence="21">
    <location>
        <begin position="747"/>
        <end position="760"/>
    </location>
</feature>
<feature type="helix" evidence="25">
    <location>
        <begin position="761"/>
        <end position="763"/>
    </location>
</feature>
<feature type="helix" evidence="21">
    <location>
        <begin position="766"/>
        <end position="776"/>
    </location>
</feature>
<feature type="helix" evidence="21">
    <location>
        <begin position="777"/>
        <end position="781"/>
    </location>
</feature>
<feature type="helix" evidence="21">
    <location>
        <begin position="785"/>
        <end position="798"/>
    </location>
</feature>
<feature type="strand" evidence="21">
    <location>
        <begin position="802"/>
        <end position="804"/>
    </location>
</feature>
<feature type="helix" evidence="21">
    <location>
        <begin position="805"/>
        <end position="812"/>
    </location>
</feature>
<feature type="helix" evidence="21">
    <location>
        <begin position="814"/>
        <end position="823"/>
    </location>
</feature>
<feature type="turn" evidence="21">
    <location>
        <begin position="824"/>
        <end position="827"/>
    </location>
</feature>
<feature type="turn" evidence="21">
    <location>
        <begin position="830"/>
        <end position="832"/>
    </location>
</feature>
<feature type="helix" evidence="21">
    <location>
        <begin position="833"/>
        <end position="841"/>
    </location>
</feature>
<feature type="turn" evidence="21">
    <location>
        <begin position="842"/>
        <end position="846"/>
    </location>
</feature>
<feature type="helix" evidence="21">
    <location>
        <begin position="852"/>
        <end position="866"/>
    </location>
</feature>
<feature type="helix" evidence="21">
    <location>
        <begin position="871"/>
        <end position="887"/>
    </location>
</feature>
<feature type="strand" evidence="25">
    <location>
        <begin position="890"/>
        <end position="893"/>
    </location>
</feature>
<feature type="helix" evidence="21">
    <location>
        <begin position="895"/>
        <end position="904"/>
    </location>
</feature>
<feature type="helix" evidence="21">
    <location>
        <begin position="907"/>
        <end position="910"/>
    </location>
</feature>
<feature type="helix" evidence="21">
    <location>
        <begin position="914"/>
        <end position="930"/>
    </location>
</feature>
<feature type="turn" evidence="21">
    <location>
        <begin position="932"/>
        <end position="935"/>
    </location>
</feature>
<feature type="helix" evidence="21">
    <location>
        <begin position="937"/>
        <end position="950"/>
    </location>
</feature>
<feature type="helix" evidence="21">
    <location>
        <begin position="956"/>
        <end position="972"/>
    </location>
</feature>
<feature type="helix" evidence="21">
    <location>
        <begin position="975"/>
        <end position="978"/>
    </location>
</feature>
<feature type="helix" evidence="21">
    <location>
        <begin position="979"/>
        <end position="981"/>
    </location>
</feature>
<feature type="helix" evidence="21">
    <location>
        <begin position="982"/>
        <end position="990"/>
    </location>
</feature>
<feature type="helix" evidence="21">
    <location>
        <begin position="995"/>
        <end position="999"/>
    </location>
</feature>
<feature type="helix" evidence="21">
    <location>
        <begin position="1001"/>
        <end position="1014"/>
    </location>
</feature>
<feature type="helix" evidence="21">
    <location>
        <begin position="1017"/>
        <end position="1023"/>
    </location>
</feature>
<feature type="helix" evidence="21">
    <location>
        <begin position="1026"/>
        <end position="1041"/>
    </location>
</feature>
<feature type="helix" evidence="21">
    <location>
        <begin position="1073"/>
        <end position="1076"/>
    </location>
</feature>
<feature type="helix" evidence="23">
    <location>
        <begin position="1103"/>
        <end position="1105"/>
    </location>
</feature>
<feature type="strand" evidence="24">
    <location>
        <begin position="1108"/>
        <end position="1110"/>
    </location>
</feature>
<feature type="helix" evidence="21">
    <location>
        <begin position="1126"/>
        <end position="1128"/>
    </location>
</feature>
<feature type="strand" evidence="21">
    <location>
        <begin position="1130"/>
        <end position="1132"/>
    </location>
</feature>
<feature type="strand" evidence="21">
    <location>
        <begin position="1150"/>
        <end position="1152"/>
    </location>
</feature>
<feature type="helix" evidence="21">
    <location>
        <begin position="1189"/>
        <end position="1214"/>
    </location>
</feature>
<feature type="helix" evidence="19">
    <location>
        <begin position="1231"/>
        <end position="1233"/>
    </location>
</feature>
<feature type="strand" evidence="21">
    <location>
        <begin position="1236"/>
        <end position="1241"/>
    </location>
</feature>
<feature type="strand" evidence="21">
    <location>
        <begin position="1245"/>
        <end position="1247"/>
    </location>
</feature>
<feature type="strand" evidence="21">
    <location>
        <begin position="1253"/>
        <end position="1255"/>
    </location>
</feature>